<protein>
    <recommendedName>
        <fullName>Uncharacterized protein Mb2326c</fullName>
    </recommendedName>
</protein>
<dbReference type="EMBL" id="LT708304">
    <property type="protein sequence ID" value="SIU00938.1"/>
    <property type="molecule type" value="Genomic_DNA"/>
</dbReference>
<dbReference type="RefSeq" id="NP_855975.1">
    <property type="nucleotide sequence ID" value="NC_002945.3"/>
</dbReference>
<dbReference type="RefSeq" id="WP_003411870.1">
    <property type="nucleotide sequence ID" value="NC_002945.4"/>
</dbReference>
<dbReference type="KEGG" id="mbo:BQ2027_MB2326C"/>
<dbReference type="PATRIC" id="fig|233413.5.peg.2550"/>
<dbReference type="Proteomes" id="UP000001419">
    <property type="component" value="Chromosome"/>
</dbReference>
<organism>
    <name type="scientific">Mycobacterium bovis (strain ATCC BAA-935 / AF2122/97)</name>
    <dbReference type="NCBI Taxonomy" id="233413"/>
    <lineage>
        <taxon>Bacteria</taxon>
        <taxon>Bacillati</taxon>
        <taxon>Actinomycetota</taxon>
        <taxon>Actinomycetes</taxon>
        <taxon>Mycobacteriales</taxon>
        <taxon>Mycobacteriaceae</taxon>
        <taxon>Mycobacterium</taxon>
        <taxon>Mycobacterium tuberculosis complex</taxon>
    </lineage>
</organism>
<reference key="1">
    <citation type="journal article" date="2003" name="Proc. Natl. Acad. Sci. U.S.A.">
        <title>The complete genome sequence of Mycobacterium bovis.</title>
        <authorList>
            <person name="Garnier T."/>
            <person name="Eiglmeier K."/>
            <person name="Camus J.-C."/>
            <person name="Medina N."/>
            <person name="Mansoor H."/>
            <person name="Pryor M."/>
            <person name="Duthoy S."/>
            <person name="Grondin S."/>
            <person name="Lacroix C."/>
            <person name="Monsempe C."/>
            <person name="Simon S."/>
            <person name="Harris B."/>
            <person name="Atkin R."/>
            <person name="Doggett J."/>
            <person name="Mayes R."/>
            <person name="Keating L."/>
            <person name="Wheeler P.R."/>
            <person name="Parkhill J."/>
            <person name="Barrell B.G."/>
            <person name="Cole S.T."/>
            <person name="Gordon S.V."/>
            <person name="Hewinson R.G."/>
        </authorList>
    </citation>
    <scope>NUCLEOTIDE SEQUENCE [LARGE SCALE GENOMIC DNA]</scope>
    <source>
        <strain>ATCC BAA-935 / AF2122/97</strain>
    </source>
</reference>
<reference key="2">
    <citation type="journal article" date="2017" name="Genome Announc.">
        <title>Updated reference genome sequence and annotation of Mycobacterium bovis AF2122/97.</title>
        <authorList>
            <person name="Malone K.M."/>
            <person name="Farrell D."/>
            <person name="Stuber T.P."/>
            <person name="Schubert O.T."/>
            <person name="Aebersold R."/>
            <person name="Robbe-Austerman S."/>
            <person name="Gordon S.V."/>
        </authorList>
    </citation>
    <scope>NUCLEOTIDE SEQUENCE [LARGE SCALE GENOMIC DNA]</scope>
    <scope>GENOME REANNOTATION</scope>
    <source>
        <strain>ATCC BAA-935 / AF2122/97</strain>
    </source>
</reference>
<accession>P64986</accession>
<accession>A0A1R3Y0Q5</accession>
<accession>Q50661</accession>
<accession>X2BKF8</accession>
<sequence>MSHDIATEEADDGALDRCVLCDLTGKRVDVKEATCTGRPATTFEQAFAVERDAGFDDFLHGPVGPRSTP</sequence>
<keyword id="KW-1185">Reference proteome</keyword>
<name>Y2326_MYCBO</name>
<proteinExistence type="predicted"/>
<feature type="chain" id="PRO_0000104014" description="Uncharacterized protein Mb2326c">
    <location>
        <begin position="1"/>
        <end position="69"/>
    </location>
</feature>
<gene>
    <name type="ordered locus">BQ2027_MB2326C</name>
</gene>